<keyword id="KW-0025">Alternative splicing</keyword>
<keyword id="KW-0378">Hydrolase</keyword>
<keyword id="KW-0442">Lipid degradation</keyword>
<keyword id="KW-0443">Lipid metabolism</keyword>
<keyword id="KW-1185">Reference proteome</keyword>
<keyword id="KW-0964">Secreted</keyword>
<keyword id="KW-0732">Signal</keyword>
<evidence type="ECO:0000250" key="1"/>
<evidence type="ECO:0000255" key="2"/>
<evidence type="ECO:0000305" key="3"/>
<gene>
    <name type="ordered locus">At1g71691</name>
    <name type="ORF">F14O23.4</name>
    <name type="ORF">F26A9.7</name>
</gene>
<name>GDL29_ARATH</name>
<sequence>MAFHFRRLCFFSALLAVVLQLLHGVSGQLVVVEEPISAPPPPLVDLNTGDGIVPALFVFGDSLIDNGNNNNIPSFAKANYFPYGIDFNGGPTGRFCNGLTMVDGIAQLLGLPLIPAYSEATGDQVLRGVNYASAAAGILPDTGGNFVGRIPFDQQIHNFETTLDQVASKSGGAVAIADSVTRSLFFIGMGSNDYLNNYLMPNFPTRNQYNSQQFGDLLVQHYTDQLTRLYNLGGRKFVVAGLGRMGCIPSILAQGNDGKCSEEVNQLVLPFNTNVKTMISNLNQNLPDAKFIYLDIAHMFEDIVANQAAYGLTTMDKGCCGIGKNRGQITCLPFETPCPNRDQYVFWDAFHPTEKVNLIMAKKAFAGDRTVAYPINIQQLASLN</sequence>
<proteinExistence type="evidence at transcript level"/>
<reference key="1">
    <citation type="journal article" date="2000" name="Nature">
        <title>Sequence and analysis of chromosome 1 of the plant Arabidopsis thaliana.</title>
        <authorList>
            <person name="Theologis A."/>
            <person name="Ecker J.R."/>
            <person name="Palm C.J."/>
            <person name="Federspiel N.A."/>
            <person name="Kaul S."/>
            <person name="White O."/>
            <person name="Alonso J."/>
            <person name="Altafi H."/>
            <person name="Araujo R."/>
            <person name="Bowman C.L."/>
            <person name="Brooks S.Y."/>
            <person name="Buehler E."/>
            <person name="Chan A."/>
            <person name="Chao Q."/>
            <person name="Chen H."/>
            <person name="Cheuk R.F."/>
            <person name="Chin C.W."/>
            <person name="Chung M.K."/>
            <person name="Conn L."/>
            <person name="Conway A.B."/>
            <person name="Conway A.R."/>
            <person name="Creasy T.H."/>
            <person name="Dewar K."/>
            <person name="Dunn P."/>
            <person name="Etgu P."/>
            <person name="Feldblyum T.V."/>
            <person name="Feng J.-D."/>
            <person name="Fong B."/>
            <person name="Fujii C.Y."/>
            <person name="Gill J.E."/>
            <person name="Goldsmith A.D."/>
            <person name="Haas B."/>
            <person name="Hansen N.F."/>
            <person name="Hughes B."/>
            <person name="Huizar L."/>
            <person name="Hunter J.L."/>
            <person name="Jenkins J."/>
            <person name="Johnson-Hopson C."/>
            <person name="Khan S."/>
            <person name="Khaykin E."/>
            <person name="Kim C.J."/>
            <person name="Koo H.L."/>
            <person name="Kremenetskaia I."/>
            <person name="Kurtz D.B."/>
            <person name="Kwan A."/>
            <person name="Lam B."/>
            <person name="Langin-Hooper S."/>
            <person name="Lee A."/>
            <person name="Lee J.M."/>
            <person name="Lenz C.A."/>
            <person name="Li J.H."/>
            <person name="Li Y.-P."/>
            <person name="Lin X."/>
            <person name="Liu S.X."/>
            <person name="Liu Z.A."/>
            <person name="Luros J.S."/>
            <person name="Maiti R."/>
            <person name="Marziali A."/>
            <person name="Militscher J."/>
            <person name="Miranda M."/>
            <person name="Nguyen M."/>
            <person name="Nierman W.C."/>
            <person name="Osborne B.I."/>
            <person name="Pai G."/>
            <person name="Peterson J."/>
            <person name="Pham P.K."/>
            <person name="Rizzo M."/>
            <person name="Rooney T."/>
            <person name="Rowley D."/>
            <person name="Sakano H."/>
            <person name="Salzberg S.L."/>
            <person name="Schwartz J.R."/>
            <person name="Shinn P."/>
            <person name="Southwick A.M."/>
            <person name="Sun H."/>
            <person name="Tallon L.J."/>
            <person name="Tambunga G."/>
            <person name="Toriumi M.J."/>
            <person name="Town C.D."/>
            <person name="Utterback T."/>
            <person name="Van Aken S."/>
            <person name="Vaysberg M."/>
            <person name="Vysotskaia V.S."/>
            <person name="Walker M."/>
            <person name="Wu D."/>
            <person name="Yu G."/>
            <person name="Fraser C.M."/>
            <person name="Venter J.C."/>
            <person name="Davis R.W."/>
        </authorList>
    </citation>
    <scope>NUCLEOTIDE SEQUENCE [LARGE SCALE GENOMIC DNA]</scope>
    <source>
        <strain>cv. Columbia</strain>
    </source>
</reference>
<reference key="2">
    <citation type="journal article" date="2017" name="Plant J.">
        <title>Araport11: a complete reannotation of the Arabidopsis thaliana reference genome.</title>
        <authorList>
            <person name="Cheng C.Y."/>
            <person name="Krishnakumar V."/>
            <person name="Chan A.P."/>
            <person name="Thibaud-Nissen F."/>
            <person name="Schobel S."/>
            <person name="Town C.D."/>
        </authorList>
    </citation>
    <scope>GENOME REANNOTATION</scope>
    <source>
        <strain>cv. Columbia</strain>
    </source>
</reference>
<reference key="3">
    <citation type="journal article" date="2004" name="Genome Res.">
        <title>Whole genome sequence comparisons and 'full-length' cDNA sequences: a combined approach to evaluate and improve Arabidopsis genome annotation.</title>
        <authorList>
            <person name="Castelli V."/>
            <person name="Aury J.-M."/>
            <person name="Jaillon O."/>
            <person name="Wincker P."/>
            <person name="Clepet C."/>
            <person name="Menard M."/>
            <person name="Cruaud C."/>
            <person name="Quetier F."/>
            <person name="Scarpelli C."/>
            <person name="Schaechter V."/>
            <person name="Temple G."/>
            <person name="Caboche M."/>
            <person name="Weissenbach J."/>
            <person name="Salanoubat M."/>
        </authorList>
    </citation>
    <scope>NUCLEOTIDE SEQUENCE [LARGE SCALE MRNA] (ISOFORM 1)</scope>
    <source>
        <strain>cv. Columbia</strain>
    </source>
</reference>
<reference key="4">
    <citation type="journal article" date="2004" name="Prog. Lipid Res.">
        <title>GDSL family of serine esterases/lipases.</title>
        <authorList>
            <person name="Akoh C.C."/>
            <person name="Lee G.-C."/>
            <person name="Liaw Y.-C."/>
            <person name="Huang T.-H."/>
            <person name="Shaw J.-F."/>
        </authorList>
    </citation>
    <scope>REVIEW</scope>
</reference>
<reference key="5">
    <citation type="journal article" date="2008" name="Pak. J. Biol. Sci.">
        <title>Sequence analysis of GDSL lipase gene family in Arabidopsis thaliana.</title>
        <authorList>
            <person name="Ling H."/>
        </authorList>
    </citation>
    <scope>GENE FAMILY</scope>
</reference>
<dbReference type="EC" id="3.1.1.-"/>
<dbReference type="EMBL" id="AC012654">
    <property type="protein sequence ID" value="AAF43219.1"/>
    <property type="molecule type" value="Genomic_DNA"/>
</dbReference>
<dbReference type="EMBL" id="AC016163">
    <property type="protein sequence ID" value="AAG51812.1"/>
    <property type="molecule type" value="Genomic_DNA"/>
</dbReference>
<dbReference type="EMBL" id="CP002684">
    <property type="protein sequence ID" value="AEE35214.1"/>
    <property type="molecule type" value="Genomic_DNA"/>
</dbReference>
<dbReference type="EMBL" id="CP002684">
    <property type="protein sequence ID" value="AEE35215.1"/>
    <property type="molecule type" value="Genomic_DNA"/>
</dbReference>
<dbReference type="EMBL" id="BX817660">
    <property type="status" value="NOT_ANNOTATED_CDS"/>
    <property type="molecule type" value="mRNA"/>
</dbReference>
<dbReference type="PIR" id="G96738">
    <property type="entry name" value="G96738"/>
</dbReference>
<dbReference type="RefSeq" id="NP_565021.2">
    <molecule id="Q9SF78-2"/>
    <property type="nucleotide sequence ID" value="NM_105824.4"/>
</dbReference>
<dbReference type="RefSeq" id="NP_974125.1">
    <molecule id="Q9SF78-1"/>
    <property type="nucleotide sequence ID" value="NM_202396.3"/>
</dbReference>
<dbReference type="SMR" id="Q9SF78"/>
<dbReference type="FunCoup" id="Q9SF78">
    <property type="interactions" value="155"/>
</dbReference>
<dbReference type="STRING" id="3702.Q9SF78"/>
<dbReference type="PaxDb" id="3702-AT1G71691.2"/>
<dbReference type="ProteomicsDB" id="247088">
    <molecule id="Q9SF78-1"/>
</dbReference>
<dbReference type="EnsemblPlants" id="AT1G71691.1">
    <molecule id="Q9SF78-2"/>
    <property type="protein sequence ID" value="AT1G71691.1"/>
    <property type="gene ID" value="AT1G71691"/>
</dbReference>
<dbReference type="EnsemblPlants" id="AT1G71691.2">
    <molecule id="Q9SF78-1"/>
    <property type="protein sequence ID" value="AT1G71691.2"/>
    <property type="gene ID" value="AT1G71691"/>
</dbReference>
<dbReference type="GeneID" id="843496"/>
<dbReference type="Gramene" id="AT1G71691.1">
    <molecule id="Q9SF78-2"/>
    <property type="protein sequence ID" value="AT1G71691.1"/>
    <property type="gene ID" value="AT1G71691"/>
</dbReference>
<dbReference type="Gramene" id="AT1G71691.2">
    <molecule id="Q9SF78-1"/>
    <property type="protein sequence ID" value="AT1G71691.2"/>
    <property type="gene ID" value="AT1G71691"/>
</dbReference>
<dbReference type="KEGG" id="ath:AT1G71691"/>
<dbReference type="Araport" id="AT1G71691"/>
<dbReference type="TAIR" id="AT1G71691"/>
<dbReference type="eggNOG" id="ENOG502QUVY">
    <property type="taxonomic scope" value="Eukaryota"/>
</dbReference>
<dbReference type="HOGENOM" id="CLU_015101_0_0_1"/>
<dbReference type="InParanoid" id="Q9SF78"/>
<dbReference type="OMA" id="AKCIFFV"/>
<dbReference type="OrthoDB" id="1600564at2759"/>
<dbReference type="PhylomeDB" id="Q9SF78"/>
<dbReference type="BioCyc" id="ARA:AT1G71691-MONOMER"/>
<dbReference type="PRO" id="PR:Q9SF78"/>
<dbReference type="Proteomes" id="UP000006548">
    <property type="component" value="Chromosome 1"/>
</dbReference>
<dbReference type="ExpressionAtlas" id="Q9SF78">
    <property type="expression patterns" value="baseline and differential"/>
</dbReference>
<dbReference type="GO" id="GO:0005576">
    <property type="term" value="C:extracellular region"/>
    <property type="evidence" value="ECO:0007669"/>
    <property type="project" value="UniProtKB-SubCell"/>
</dbReference>
<dbReference type="GO" id="GO:0016788">
    <property type="term" value="F:hydrolase activity, acting on ester bonds"/>
    <property type="evidence" value="ECO:0007669"/>
    <property type="project" value="InterPro"/>
</dbReference>
<dbReference type="GO" id="GO:0016042">
    <property type="term" value="P:lipid catabolic process"/>
    <property type="evidence" value="ECO:0007669"/>
    <property type="project" value="UniProtKB-KW"/>
</dbReference>
<dbReference type="CDD" id="cd01837">
    <property type="entry name" value="SGNH_plant_lipase_like"/>
    <property type="match status" value="1"/>
</dbReference>
<dbReference type="Gene3D" id="3.40.50.1110">
    <property type="entry name" value="SGNH hydrolase"/>
    <property type="match status" value="1"/>
</dbReference>
<dbReference type="InterPro" id="IPR001087">
    <property type="entry name" value="GDSL"/>
</dbReference>
<dbReference type="InterPro" id="IPR051238">
    <property type="entry name" value="GDSL_esterase/lipase"/>
</dbReference>
<dbReference type="InterPro" id="IPR036514">
    <property type="entry name" value="SGNH_hydro_sf"/>
</dbReference>
<dbReference type="InterPro" id="IPR035669">
    <property type="entry name" value="SGNH_plant_lipase-like"/>
</dbReference>
<dbReference type="PANTHER" id="PTHR45650">
    <property type="entry name" value="GDSL-LIKE LIPASE/ACYLHYDROLASE-RELATED"/>
    <property type="match status" value="1"/>
</dbReference>
<dbReference type="PANTHER" id="PTHR45650:SF22">
    <property type="entry name" value="OS05G0419800 PROTEIN"/>
    <property type="match status" value="1"/>
</dbReference>
<dbReference type="Pfam" id="PF00657">
    <property type="entry name" value="Lipase_GDSL"/>
    <property type="match status" value="1"/>
</dbReference>
<comment type="subcellular location">
    <subcellularLocation>
        <location evidence="3">Secreted</location>
    </subcellularLocation>
</comment>
<comment type="alternative products">
    <event type="alternative splicing"/>
    <isoform>
        <id>Q9SF78-1</id>
        <name>1</name>
        <sequence type="displayed"/>
    </isoform>
    <isoform>
        <id>Q9SF78-2</id>
        <name>2</name>
        <sequence type="described" ref="VSP_036694"/>
    </isoform>
</comment>
<comment type="similarity">
    <text evidence="3">Belongs to the 'GDSL' lipolytic enzyme family.</text>
</comment>
<comment type="sequence caution" evidence="3">
    <conflict type="miscellaneous discrepancy">
        <sequence resource="EMBL" id="BX817660"/>
    </conflict>
    <text>Sequencing errors.</text>
</comment>
<accession>Q9SF78</accession>
<accession>Q3ECE0</accession>
<feature type="signal peptide" evidence="2">
    <location>
        <begin position="1"/>
        <end position="27"/>
    </location>
</feature>
<feature type="chain" id="PRO_0000367370" description="GDSL esterase/lipase At1g71691">
    <location>
        <begin position="28"/>
        <end position="384"/>
    </location>
</feature>
<feature type="active site" description="Nucleophile" evidence="1">
    <location>
        <position position="62"/>
    </location>
</feature>
<feature type="active site" evidence="1">
    <location>
        <position position="348"/>
    </location>
</feature>
<feature type="active site" evidence="1">
    <location>
        <position position="351"/>
    </location>
</feature>
<feature type="splice variant" id="VSP_036694" description="In isoform 2." evidence="3">
    <original>MAFHFRRLCFFSALLAVVLQLLHGVSGQLVVVEEPISAPPPPLVDLNTGDGIVPALFVFGDSLIDNGNNNNIPSFAKANYFPYGIDFNGGPTGRFCNGLTMVDGIA</original>
    <variation>MGLVT</variation>
    <location>
        <begin position="1"/>
        <end position="106"/>
    </location>
</feature>
<protein>
    <recommendedName>
        <fullName>GDSL esterase/lipase At1g71691</fullName>
        <ecNumber>3.1.1.-</ecNumber>
    </recommendedName>
    <alternativeName>
        <fullName>Extracellular lipase At1g71691</fullName>
    </alternativeName>
</protein>
<organism>
    <name type="scientific">Arabidopsis thaliana</name>
    <name type="common">Mouse-ear cress</name>
    <dbReference type="NCBI Taxonomy" id="3702"/>
    <lineage>
        <taxon>Eukaryota</taxon>
        <taxon>Viridiplantae</taxon>
        <taxon>Streptophyta</taxon>
        <taxon>Embryophyta</taxon>
        <taxon>Tracheophyta</taxon>
        <taxon>Spermatophyta</taxon>
        <taxon>Magnoliopsida</taxon>
        <taxon>eudicotyledons</taxon>
        <taxon>Gunneridae</taxon>
        <taxon>Pentapetalae</taxon>
        <taxon>rosids</taxon>
        <taxon>malvids</taxon>
        <taxon>Brassicales</taxon>
        <taxon>Brassicaceae</taxon>
        <taxon>Camelineae</taxon>
        <taxon>Arabidopsis</taxon>
    </lineage>
</organism>